<evidence type="ECO:0000250" key="1"/>
<evidence type="ECO:0000250" key="2">
    <source>
        <dbReference type="UniProtKB" id="P03300"/>
    </source>
</evidence>
<evidence type="ECO:0000250" key="3">
    <source>
        <dbReference type="UniProtKB" id="P03303"/>
    </source>
</evidence>
<evidence type="ECO:0000250" key="4">
    <source>
        <dbReference type="UniProtKB" id="P08617"/>
    </source>
</evidence>
<evidence type="ECO:0000250" key="5">
    <source>
        <dbReference type="UniProtKB" id="P12296"/>
    </source>
</evidence>
<evidence type="ECO:0000255" key="6"/>
<evidence type="ECO:0000255" key="7">
    <source>
        <dbReference type="PROSITE-ProRule" id="PRU00539"/>
    </source>
</evidence>
<evidence type="ECO:0000255" key="8">
    <source>
        <dbReference type="PROSITE-ProRule" id="PRU00551"/>
    </source>
</evidence>
<evidence type="ECO:0000255" key="9">
    <source>
        <dbReference type="PROSITE-ProRule" id="PRU01222"/>
    </source>
</evidence>
<evidence type="ECO:0000305" key="10"/>
<protein>
    <recommendedName>
        <fullName>Genome polyprotein</fullName>
    </recommendedName>
    <component>
        <recommendedName>
            <fullName>Capsid protein VP0</fullName>
        </recommendedName>
        <alternativeName>
            <fullName>VP4-VP2</fullName>
        </alternativeName>
    </component>
    <component>
        <recommendedName>
            <fullName>Capsid protein VP4</fullName>
        </recommendedName>
        <alternativeName>
            <fullName>P1A</fullName>
        </alternativeName>
        <alternativeName>
            <fullName>Virion protein 4</fullName>
        </alternativeName>
    </component>
    <component>
        <recommendedName>
            <fullName>Capsid protein VP2</fullName>
        </recommendedName>
        <alternativeName>
            <fullName>P1B</fullName>
        </alternativeName>
        <alternativeName>
            <fullName>Virion protein 2</fullName>
        </alternativeName>
    </component>
    <component>
        <recommendedName>
            <fullName>Capsid protein VP3</fullName>
        </recommendedName>
        <alternativeName>
            <fullName>P1C</fullName>
        </alternativeName>
        <alternativeName>
            <fullName>Virion protein 3</fullName>
        </alternativeName>
    </component>
    <component>
        <recommendedName>
            <fullName>Protein VP1-2A</fullName>
        </recommendedName>
        <alternativeName>
            <fullName>VPX</fullName>
        </alternativeName>
    </component>
    <component>
        <recommendedName>
            <fullName>Capsid protein VP1</fullName>
        </recommendedName>
        <alternativeName>
            <fullName>P1D</fullName>
        </alternativeName>
        <alternativeName>
            <fullName>Virion protein 1</fullName>
        </alternativeName>
    </component>
    <component>
        <recommendedName>
            <fullName>Assembly signal 2A</fullName>
        </recommendedName>
        <alternativeName>
            <fullName evidence="4">pX</fullName>
        </alternativeName>
    </component>
    <component>
        <recommendedName>
            <fullName>Protein 2BC</fullName>
        </recommendedName>
    </component>
    <component>
        <recommendedName>
            <fullName>Protein 2B</fullName>
            <shortName>P2B</shortName>
        </recommendedName>
    </component>
    <component>
        <recommendedName>
            <fullName>Protein 2C</fullName>
            <shortName>P2C</shortName>
            <ecNumber>3.6.1.15</ecNumber>
        </recommendedName>
    </component>
    <component>
        <recommendedName>
            <fullName>Protein 3ABCD</fullName>
            <shortName>P3</shortName>
        </recommendedName>
    </component>
    <component>
        <recommendedName>
            <fullName>Protein 3ABC</fullName>
        </recommendedName>
    </component>
    <component>
        <recommendedName>
            <fullName>Protein 3AB</fullName>
        </recommendedName>
    </component>
    <component>
        <recommendedName>
            <fullName>Protein 3A</fullName>
            <shortName>P3A</shortName>
        </recommendedName>
    </component>
    <component>
        <recommendedName>
            <fullName>Viral protein genome-linked</fullName>
            <shortName>VPg</shortName>
        </recommendedName>
        <alternativeName>
            <fullName>Protein 3B</fullName>
            <shortName>P3B</shortName>
        </alternativeName>
    </component>
    <component>
        <recommendedName>
            <fullName>Protein 3CD</fullName>
        </recommendedName>
    </component>
    <component>
        <recommendedName>
            <fullName>Protease 3C</fullName>
            <shortName>P3C</shortName>
            <ecNumber evidence="4">3.4.22.28</ecNumber>
        </recommendedName>
        <alternativeName>
            <fullName>Picornain 3C</fullName>
        </alternativeName>
    </component>
    <component>
        <recommendedName>
            <fullName>RNA-directed RNA polymerase 3D-POL</fullName>
            <shortName>P3D-POL</shortName>
            <ecNumber evidence="4">2.7.7.48</ecNumber>
        </recommendedName>
    </component>
</protein>
<comment type="function">
    <molecule>Capsid protein VP1</molecule>
    <text evidence="4">Capsid proteins VP1, VP2, and VP3 form a closed capsid enclosing the viral positive strand RNA genome. All these proteins contain a beta-sheet structure called beta-barrel jelly roll. Together they form an icosahedral capsid (T=3) composed of 60 copies of each VP1, VP2, and VP3, with a diameter of approximately 300 Angstroms. VP1 is situated at the 12 fivefold axes, whereas VP2 and VP3 are located at the quasi-sixfold axes. The naked capsid interacts with the host receptor HAVCR1 to provide virion attachment to and probably entry into the target cell.</text>
</comment>
<comment type="function">
    <molecule>Capsid protein VP2</molecule>
    <text evidence="4">Capsid proteins VP1, VP2, and VP3 form a closed capsid enclosing the viral positive strand RNA genome. All these proteins contain a beta-sheet structure called beta-barrel jelly roll. Together they form an icosahedral capsid (T=3) composed of 60 copies of each VP1, VP2, and VP3, with a diameter of approximately 300 Angstroms. VP1 is situated at the 12 fivefold axes, whereas VP2 and VP3 are located at the quasi-sixfold axes. The naked capsid interacts with the host receptor HAVCR1 to provide virion attachment to and probably entry into the target cell.</text>
</comment>
<comment type="function">
    <molecule>Capsid protein VP3</molecule>
    <text evidence="4">Capsid proteins VP1, VP2, and VP3 form a closed capsid enclosing the viral positive strand RNA genome. All these proteins contain a beta-sheet structure called beta-barrel jelly roll. Together they form an icosahedral capsid (T=3) composed of 60 copies of each VP1, VP2, and VP3, with a diameter of approximately 300 Angstroms. VP1 is situated at the 12 fivefold axes, whereas VP2 and VP3 are located at the quasi-sixfold axes. The naked capsid interacts with the host receptor HAVCR1 to provide virion attachment to and probably entry into the target cell.</text>
</comment>
<comment type="function">
    <molecule>Capsid protein VP0</molecule>
    <text evidence="4">VP0 precursor is a component of the immature procapsids.</text>
</comment>
<comment type="function">
    <molecule>Capsid protein VP4</molecule>
    <text evidence="4">Plays a role in the assembly of the 12 pentamers into an icosahedral structure. Has not been detected in mature virions, supposedly owing to its small size.</text>
</comment>
<comment type="function">
    <molecule>Protein VP1-2A</molecule>
    <text evidence="4">Precursor component of immature procapsids that corresponds to an extended form of the structural protein VP1. After maturation, possibly by the host Cathepsin L, the assembly signal 2A is cleaved to give rise to the mature VP1 protein.</text>
</comment>
<comment type="function">
    <molecule>Protein 2B</molecule>
    <text evidence="4">Functions as a viroporin. Affects membrane integrity and causes an increase in membrane permeability. Involved in host intracellular membrane rearrangements probably to give rise to the viral factories. Does not disrupt calcium homeostasis or glycoprotein trafficking. Antagonizes the innate immune response of the host by suppressing IFN-beta synthesis, which it achieves by interfering with the RIG-I/IFIH1 pathway.</text>
</comment>
<comment type="function">
    <molecule>Protein 2BC</molecule>
    <text evidence="4">Affects membrane integrity and causes an increase in membrane permeability.</text>
</comment>
<comment type="function">
    <molecule>Protein 2C</molecule>
    <text evidence="4">Associates with and induces structural rearrangements of intracellular membranes. Displays RNA-binding activity.</text>
</comment>
<comment type="function">
    <molecule>Protein 3ABC</molecule>
    <text evidence="4">The precursor 3ABC is targeted to the mitochondrial membrane where protease 3C activity cleaves and inhibits the host antiviral protein MAVS, thereby disrupting activation of IRF3 through the IFIH1/MDA5 pathway. In vivo, the protease activity of 3ABC precursor is more efficient in cleaving the 2BC precursor than that of protein 3C. The 3ABC precursor may therefore play a role in the proteolytic processing of the polyprotein. Possible viroporin.</text>
</comment>
<comment type="function">
    <molecule>Protein 3AB</molecule>
    <text evidence="4">Interacts with the 3CD precursor and with RNA structures found at both the 5'- and 3'-termini of the viral genome. Since the 3AB precursor contains the hydrophobic domain 3A, it probably anchors the whole viral replicase complex to intracellular membranes on which viral RNA synthesis occurs.</text>
</comment>
<comment type="function">
    <molecule>Protein 3A</molecule>
    <text evidence="4">May serve as membrane anchor to the 3AB and 3ABC precursors via its hydrophobic domain. May interact with RNA.</text>
</comment>
<comment type="function">
    <molecule>Viral protein genome-linked</molecule>
    <text evidence="2 4">Acts as a primer for viral RNA replication and remains covalently bound to viral genomic RNA. VPg is uridylylated prior to priming replication into VPg-pUpU. The VPg-pUpU is then used as primer on the genomic RNA poly(A) by the RNA-dependent RNA polymerase to replicate the viral genome.</text>
</comment>
<comment type="function">
    <molecule>Protease 3C</molecule>
    <text evidence="4">Cysteine protease that generates mature viral proteins from the precursor polyprotein. In addition to its proteolytic activity, it binds to viral RNA, and thus influences viral genome replication. RNA and substrate bind cooperatively to the protease. Cleaves IKBKG/NEMO to impair innate immune signaling. Cleaves host PABPC1 which may participate in the switch of viral translation to RNA synthesis.</text>
</comment>
<comment type="function">
    <molecule>Protein 3CD</molecule>
    <text evidence="4">Interacts with the 3AB precursor and with RNA structures found at both the 5'- and 3'-termini of the viral genome. Disrupts TLR3 signaling by degrading the host adapter protein TICAM1/TRIF.</text>
</comment>
<comment type="function">
    <text evidence="4">RNA-directed RNA polymerase 3D-POL replicates genomic and antigenomic RNA by recognizing replications specific signals.</text>
</comment>
<comment type="catalytic activity">
    <reaction evidence="4 7">
        <text>RNA(n) + a ribonucleoside 5'-triphosphate = RNA(n+1) + diphosphate</text>
        <dbReference type="Rhea" id="RHEA:21248"/>
        <dbReference type="Rhea" id="RHEA-COMP:14527"/>
        <dbReference type="Rhea" id="RHEA-COMP:17342"/>
        <dbReference type="ChEBI" id="CHEBI:33019"/>
        <dbReference type="ChEBI" id="CHEBI:61557"/>
        <dbReference type="ChEBI" id="CHEBI:140395"/>
        <dbReference type="EC" id="2.7.7.48"/>
    </reaction>
</comment>
<comment type="catalytic activity">
    <reaction evidence="4">
        <text>a ribonucleoside 5'-triphosphate + H2O = a ribonucleoside 5'-diphosphate + phosphate + H(+)</text>
        <dbReference type="Rhea" id="RHEA:23680"/>
        <dbReference type="ChEBI" id="CHEBI:15377"/>
        <dbReference type="ChEBI" id="CHEBI:15378"/>
        <dbReference type="ChEBI" id="CHEBI:43474"/>
        <dbReference type="ChEBI" id="CHEBI:57930"/>
        <dbReference type="ChEBI" id="CHEBI:61557"/>
        <dbReference type="EC" id="3.6.1.15"/>
    </reaction>
</comment>
<comment type="catalytic activity">
    <reaction evidence="9">
        <text>Selective cleavage of Gln-|-Gly bond in the poliovirus polyprotein. In other picornavirus reactions Glu may be substituted for Gln, and Ser or Thr for Gly.</text>
        <dbReference type="EC" id="3.4.22.28"/>
    </reaction>
</comment>
<comment type="subunit">
    <molecule>Protein 2B</molecule>
    <text evidence="4">Homodimer. Homomultimer; probably interacts with membranes in a multimeric form. Seems to assemble into amyloid-like fibers.</text>
</comment>
<comment type="subunit">
    <molecule>Protein 3AB</molecule>
    <text evidence="4">Homodimer. Monomer. Interacts with protein 3CD.</text>
</comment>
<comment type="subunit">
    <molecule>Protein 3A</molecule>
    <text evidence="4">Interacts with host ACBD3 (By similarity).</text>
</comment>
<comment type="subunit">
    <molecule>Protein 3CD</molecule>
    <text evidence="4">Interacts with protein 3AB.</text>
</comment>
<comment type="subunit">
    <molecule>Protein 3ABC</molecule>
    <text evidence="4">Interacts with human MAVS.</text>
</comment>
<comment type="subunit">
    <molecule>Protease 3C</molecule>
    <text evidence="4">Homodimer; disulfide-linked.</text>
</comment>
<comment type="subunit">
    <molecule>Protein VP1-2A</molecule>
    <text evidence="4">Homopentamer. Homooligomer.</text>
</comment>
<comment type="subunit">
    <molecule>Capsid protein VP1</molecule>
    <text evidence="4">Interacts with capsid protein VP2. Interacts with capsid protein VP3.</text>
</comment>
<comment type="subunit">
    <molecule>Capsid protein VP2</molecule>
    <text evidence="4">Interacts with capsid protein VP1. Interacts with capsid protein VP3.</text>
</comment>
<comment type="subunit">
    <molecule>Capsid protein VP3</molecule>
    <text evidence="4">Interacts with capsid protein VP1. Interacts with capsid protein VP2.</text>
</comment>
<comment type="subcellular location">
    <molecule>Capsid protein VP2</molecule>
    <subcellularLocation>
        <location evidence="4">Virion</location>
    </subcellularLocation>
    <subcellularLocation>
        <location evidence="4">Host endosome</location>
        <location evidence="4">Host multivesicular body</location>
    </subcellularLocation>
    <text evidence="4">The egress of newly formed virions occurs through an exosome-like mechanism involving endosomal budding of viral capsids into multivesicular bodies.</text>
</comment>
<comment type="subcellular location">
    <molecule>Capsid protein VP3</molecule>
    <subcellularLocation>
        <location evidence="4">Virion</location>
    </subcellularLocation>
    <subcellularLocation>
        <location evidence="4">Host endosome</location>
        <location evidence="4">Host multivesicular body</location>
    </subcellularLocation>
    <text evidence="4">The egress of newly formed virions occurs through an exosome-like mechanism involving endosomal budding of viral capsids into multivesicular bodies.</text>
</comment>
<comment type="subcellular location">
    <molecule>Capsid protein VP1</molecule>
    <subcellularLocation>
        <location evidence="4">Virion</location>
    </subcellularLocation>
    <subcellularLocation>
        <location evidence="4">Host endosome</location>
        <location evidence="4">Host multivesicular body</location>
    </subcellularLocation>
    <text evidence="4">The egress of newly formed virions occurs through an exosome-like mechanism involving endosomal budding of viral capsids into multivesicular bodies.</text>
</comment>
<comment type="subcellular location">
    <molecule>Capsid protein VP4</molecule>
    <subcellularLocation>
        <location evidence="4">Virion</location>
    </subcellularLocation>
    <text evidence="4">Present in the full mature virion. The egress of newly formed virions occurs through an exosome-like mechanism involving endosomal budding of viral capsids into multivesicular bodies.</text>
</comment>
<comment type="subcellular location">
    <molecule>Protein 2B</molecule>
    <subcellularLocation>
        <location evidence="4">Host membrane</location>
        <topology evidence="4">Peripheral membrane protein</topology>
    </subcellularLocation>
    <text evidence="4">Probably localizes to intracellular membrane vesicles that are induced after virus infection as the site for viral RNA replication.</text>
</comment>
<comment type="subcellular location">
    <molecule>Protein 2C</molecule>
    <subcellularLocation>
        <location evidence="4">Host membrane</location>
        <topology evidence="4">Single-pass membrane protein</topology>
    </subcellularLocation>
    <text evidence="4">Probably localizes to intracellular membrane vesicles that are induced after virus infection as the site for viral RNA replication. May associate with membranes through a N-terminal amphipathic helix.</text>
</comment>
<comment type="subcellular location">
    <molecule>Protein 3ABC</molecule>
    <subcellularLocation>
        <location evidence="4">Host membrane</location>
        <topology evidence="6">Single-pass membrane protein</topology>
    </subcellularLocation>
    <subcellularLocation>
        <location evidence="4">Host mitochondrion outer membrane</location>
        <topology evidence="4">Single-pass membrane protein</topology>
    </subcellularLocation>
    <text evidence="4">Probably localizes to intracellular membrane vesicles that are induced after virus infection as the site for viral RNA replication.</text>
</comment>
<comment type="subcellular location">
    <molecule>Protein 3AB</molecule>
    <subcellularLocation>
        <location evidence="4">Host membrane</location>
        <topology evidence="6">Single-pass membrane protein</topology>
    </subcellularLocation>
    <text evidence="4">Probably localizes to intracellular membrane vesicles that are induced after virus infection as the site for viral RNA replication.</text>
</comment>
<comment type="subcellular location">
    <molecule>Protein 3A</molecule>
    <subcellularLocation>
        <location evidence="4">Host membrane</location>
        <topology evidence="6">Single-pass membrane protein</topology>
    </subcellularLocation>
    <text evidence="4">Probably localizes to intracellular membrane vesicles that are induced after virus infection as the site for viral RNA replication.</text>
</comment>
<comment type="subcellular location">
    <molecule>Viral protein genome-linked</molecule>
    <subcellularLocation>
        <location evidence="4">Virion</location>
    </subcellularLocation>
</comment>
<comment type="subcellular location">
    <molecule>Protease 3C</molecule>
    <subcellularLocation>
        <location evidence="4">Host cytoplasm</location>
    </subcellularLocation>
</comment>
<comment type="subcellular location">
    <molecule>RNA-directed RNA polymerase 3D-POL</molecule>
    <subcellularLocation>
        <location evidence="4">Host cytoplasmic vesicle membrane</location>
        <topology evidence="4">Peripheral membrane protein</topology>
        <orientation evidence="4">Cytoplasmic side</orientation>
    </subcellularLocation>
    <text evidence="4">Interacts with membranes in a complex with viral protein 3AB. Probably localizes to the surface of intracellular membrane vesicles that are induced after virus infection as the site for viral RNA replication. These vesicles are derived from the endoplasmic reticulum.</text>
</comment>
<comment type="domain">
    <molecule>Protein VP1-2A</molecule>
    <text evidence="4">The assembly signal 2A region mediates pentamerization of P1-2A.</text>
</comment>
<comment type="domain">
    <molecule>Genome polyprotein</molecule>
    <text evidence="4">Late-budding domains (L domains) are short sequence motifs essential for viral particle budding. They recruit proteins of the host ESCRT machinery (Endosomal Sorting Complex Required for Transport) or ESCRT-associated proteins. The genome polyprotein contains two L domains: a tandem of (L)YPX(n)L domain which is known to bind the PDCD6IP/ALIX adaptater protein.</text>
</comment>
<comment type="domain">
    <molecule>Capsid protein VP2</molecule>
    <text evidence="4">Late-budding domains (L domains) are short sequence motifs essential for viral particle budding. They recruit proteins of the host ESCRT machinery (Endosomal Sorting Complex Required for Transport) or ESCRT-associated proteins. Capsid protein VP2 contains two L domains: a tandem of (L)YPX(n)L domain which is known to bind the Alix adaptater protein.</text>
</comment>
<comment type="domain">
    <molecule>Protein 2B</molecule>
    <text evidence="4">The C-terminus displays a membrane-penetrating ability.</text>
</comment>
<comment type="PTM">
    <molecule>Genome polyprotein</molecule>
    <text evidence="4">Specific enzymatic cleavages by viral protease in vivo yield a variety of precursors and mature proteins. Polyprotein processing intermediates are produced, such as P1-2A which is a functional precursor of the structural proteins, VP0 which is a VP4-VP2 precursor, VP1-2A precursor, 3ABC precursor which is a stable and catalytically active precursor of 3A, 3B and 3C proteins, 3AB and 3CD precursors. The assembly signal 2A is removed from VP1-2A by a host protease, possibly host Cathepsin L. This cleavage occurs over a region of 3 amino-acids probably generating VP1 proteins with heterogeneous C-termini.</text>
</comment>
<comment type="PTM">
    <molecule>Capsid protein VP0</molecule>
    <text evidence="3">During virion maturation, immature virions are rendered infectious following cleavage of VP0 into VP4 and VP2. This maturation seems to be an autocatalytic event triggered by the presence of RNA in the capsid and is followed by a conformational change of the particle.</text>
</comment>
<comment type="PTM">
    <molecule>Protein VP1-2A</molecule>
    <text evidence="4">The assembly signal 2A is removed from VP1-2A by a host protease, possibly host Cathepsin L in naked virions. This cleavage does not occur in enveloped virions. This cleavage occurs over a region of 3 amino-acids probably generating VP1 proteins with heterogeneous C-termini.</text>
</comment>
<comment type="PTM">
    <molecule>Viral protein genome-linked</molecule>
    <text evidence="2">VPg is uridylylated prior to priming replication into VPg-pUpU.</text>
</comment>
<comment type="PTM">
    <molecule>Capsid protein VP4</molecule>
    <text evidence="4">Unlike other picornaviruses, does not seem to be myristoylated.</text>
</comment>
<comment type="miscellaneous">
    <molecule>Genome polyprotein</molecule>
    <text evidence="4">The need for an intact eIF4G factor for the initiation of translation of HAV results in an inability to shut off host protein synthesis by a mechanism similar to that of other picornaviruses.</text>
</comment>
<comment type="miscellaneous">
    <molecule>Genome polyprotein</molecule>
    <text evidence="4">During infection, enveloped virions (eHAV) are released from cells. These eHAV are cloaked in host-derived membranes and resemble exosomes. The membrane of eHAV is devoid of viral proteins and thus prevents their neutralization by antibodies. eHAV budding is dependent on ESCRT-associated proteins VPS4B and PDCD6IP/ALIX. eHAV are produced and released in the serum and plasma, but not in bile and feces which only contain the naked, nonenveloped virions. It is likely that eHAV also use HAVCR1 as a functional receptor to infect cells, an evolutionary trait that may enhance HAV infectivity.</text>
</comment>
<comment type="similarity">
    <text evidence="10">Belongs to the picornaviridae polyprotein family.</text>
</comment>
<comment type="caution">
    <text evidence="4">It is uncertain whether Met-1 or Met-3 is the initiator.</text>
</comment>
<proteinExistence type="inferred from homology"/>
<organism>
    <name type="scientific">Human hepatitis A virus genotype IIB (isolate SLF88)</name>
    <name type="common">HHAV</name>
    <name type="synonym">Human hepatitis A virus (isolate Human/Sierra Leone/SLF88/1988)</name>
    <dbReference type="NCBI Taxonomy" id="470592"/>
    <lineage>
        <taxon>Viruses</taxon>
        <taxon>Riboviria</taxon>
        <taxon>Orthornavirae</taxon>
        <taxon>Pisuviricota</taxon>
        <taxon>Pisoniviricetes</taxon>
        <taxon>Picornavirales</taxon>
        <taxon>Picornaviridae</taxon>
        <taxon>Heptrevirinae</taxon>
        <taxon>Hepatovirus</taxon>
        <taxon>Hepatovirus ahepa</taxon>
        <taxon>Hepatovirus A</taxon>
    </lineage>
</organism>
<feature type="chain" id="PRO_0000310580" description="Genome polyprotein">
    <location>
        <begin position="1"/>
        <end position="2227"/>
    </location>
</feature>
<feature type="chain" id="PRO_0000310581" description="Capsid protein VP0">
    <location>
        <begin position="1"/>
        <end position="245"/>
    </location>
</feature>
<feature type="chain" id="PRO_0000310582" description="Capsid protein VP4">
    <location>
        <begin position="1"/>
        <end position="23"/>
    </location>
</feature>
<feature type="chain" id="PRO_0000310583" description="Capsid protein VP2">
    <location>
        <begin position="24"/>
        <end position="245"/>
    </location>
</feature>
<feature type="chain" id="PRO_0000310584" description="Capsid protein VP3">
    <location>
        <begin position="246"/>
        <end position="491"/>
    </location>
</feature>
<feature type="chain" id="PRO_0000310585" description="Protein VP1-2A">
    <location>
        <begin position="492"/>
        <end position="836"/>
    </location>
</feature>
<feature type="chain" id="PRO_0000310586" description="Capsid protein VP1">
    <location>
        <begin position="492"/>
        <end position="765"/>
    </location>
</feature>
<feature type="chain" id="PRO_0000310587" description="Assembly signal 2A">
    <location>
        <begin position="766"/>
        <end position="836"/>
    </location>
</feature>
<feature type="chain" id="PRO_0000310588" description="Protein 2BC">
    <location>
        <begin position="837"/>
        <end position="1422"/>
    </location>
</feature>
<feature type="chain" id="PRO_0000310589" description="Protein 2B">
    <location>
        <begin position="837"/>
        <end position="1087"/>
    </location>
</feature>
<feature type="chain" id="PRO_0000310590" description="Protein 2C">
    <location>
        <begin position="1088"/>
        <end position="1422"/>
    </location>
</feature>
<feature type="chain" id="PRO_0000310591" description="Protein 3ABCD">
    <location>
        <begin position="1423"/>
        <end position="2227"/>
    </location>
</feature>
<feature type="chain" id="PRO_0000310592" description="Protein 3ABC">
    <location>
        <begin position="1423"/>
        <end position="1738"/>
    </location>
</feature>
<feature type="chain" id="PRO_0000310593" description="Protein 3AB">
    <location>
        <begin position="1423"/>
        <end position="1519"/>
    </location>
</feature>
<feature type="chain" id="PRO_0000310594" description="Protein 3A">
    <location>
        <begin position="1423"/>
        <end position="1496"/>
    </location>
</feature>
<feature type="chain" id="PRO_0000310595" description="Viral protein genome-linked">
    <location>
        <begin position="1497"/>
        <end position="1519"/>
    </location>
</feature>
<feature type="chain" id="PRO_0000310596" description="Protein 3CD">
    <location>
        <begin position="1520"/>
        <end position="2227"/>
    </location>
</feature>
<feature type="chain" id="PRO_0000310597" description="Protease 3C">
    <location>
        <begin position="1520"/>
        <end position="1738"/>
    </location>
</feature>
<feature type="chain" id="PRO_0000310598" description="RNA-directed RNA polymerase 3D-POL">
    <location>
        <begin position="1739"/>
        <end position="2227"/>
    </location>
</feature>
<feature type="transmembrane region" description="Helical" evidence="6">
    <location>
        <begin position="1010"/>
        <end position="1030"/>
    </location>
</feature>
<feature type="transmembrane region" description="Helical" evidence="6">
    <location>
        <begin position="1462"/>
        <end position="1482"/>
    </location>
</feature>
<feature type="domain" description="SF3 helicase" evidence="8">
    <location>
        <begin position="1204"/>
        <end position="1366"/>
    </location>
</feature>
<feature type="domain" description="Peptidase C3" evidence="9">
    <location>
        <begin position="1514"/>
        <end position="1728"/>
    </location>
</feature>
<feature type="domain" description="RdRp catalytic" evidence="7">
    <location>
        <begin position="1976"/>
        <end position="2097"/>
    </location>
</feature>
<feature type="region of interest" description="Involved in P1-2A pentamerization" evidence="4">
    <location>
        <begin position="766"/>
        <end position="836"/>
    </location>
</feature>
<feature type="region of interest" description="Membrane-penetrating ability" evidence="4">
    <location>
        <begin position="1043"/>
        <end position="1070"/>
    </location>
</feature>
<feature type="coiled-coil region" evidence="6">
    <location>
        <begin position="1127"/>
        <end position="1152"/>
    </location>
</feature>
<feature type="short sequence motif" description="(L)YPX(n)L motif" evidence="4">
    <location>
        <begin position="167"/>
        <end position="171"/>
    </location>
</feature>
<feature type="short sequence motif" description="(L)YPX(n)L motif" evidence="4">
    <location>
        <begin position="200"/>
        <end position="205"/>
    </location>
</feature>
<feature type="active site" description="For protease 3C activity" evidence="9">
    <location>
        <position position="1563"/>
    </location>
</feature>
<feature type="active site" description="For protease 3C activity" evidence="9">
    <location>
        <position position="1603"/>
    </location>
</feature>
<feature type="active site" description="For protease 3C activity" evidence="9">
    <location>
        <position position="1691"/>
    </location>
</feature>
<feature type="active site" description="For RdRp activity" evidence="5">
    <location>
        <position position="2083"/>
    </location>
</feature>
<feature type="binding site" evidence="8">
    <location>
        <begin position="1230"/>
        <end position="1237"/>
    </location>
    <ligand>
        <name>ATP</name>
        <dbReference type="ChEBI" id="CHEBI:30616"/>
    </ligand>
</feature>
<feature type="site" description="Cleavage" evidence="6">
    <location>
        <begin position="23"/>
        <end position="24"/>
    </location>
</feature>
<feature type="site" description="Cleavage; by protease 3C" evidence="4">
    <location>
        <begin position="245"/>
        <end position="246"/>
    </location>
</feature>
<feature type="site" description="Cleavage; by protease 3C" evidence="4">
    <location>
        <begin position="491"/>
        <end position="492"/>
    </location>
</feature>
<feature type="site" description="Cleavage; partial; by host" evidence="4">
    <location>
        <begin position="765"/>
        <end position="766"/>
    </location>
</feature>
<feature type="site" description="Important for VP1 folding and capsid assembly" evidence="4">
    <location>
        <position position="769"/>
    </location>
</feature>
<feature type="site" description="Cleavage; by protease 3C" evidence="4">
    <location>
        <begin position="836"/>
        <end position="837"/>
    </location>
</feature>
<feature type="site" description="Cleavage; by protease 3C" evidence="4">
    <location>
        <begin position="1087"/>
        <end position="1088"/>
    </location>
</feature>
<feature type="site" description="Cleavage; by protease 3C" evidence="4">
    <location>
        <begin position="1422"/>
        <end position="1423"/>
    </location>
</feature>
<feature type="site" description="Cleavage; by protease 3C" evidence="4">
    <location>
        <begin position="1496"/>
        <end position="1497"/>
    </location>
</feature>
<feature type="site" description="Cleavage; by protease 3C" evidence="4">
    <location>
        <begin position="1519"/>
        <end position="1520"/>
    </location>
</feature>
<feature type="site" description="Cleavage; by protease 3C" evidence="4">
    <location>
        <begin position="1738"/>
        <end position="1739"/>
    </location>
</feature>
<feature type="modified residue" description="O-(5'-phospho-RNA)-tyrosine" evidence="1">
    <location>
        <position position="1499"/>
    </location>
</feature>
<feature type="disulfide bond" description="Interchain" evidence="4">
    <location>
        <position position="1543"/>
    </location>
</feature>
<sequence length="2227" mass="251728">MNMSRQGIFQTVGSGLDHILSLADIEEEQMIQSVDRTAVTGASYFTSVDQSSVHTAEVGSHQVEPLKTSVDKPGSKKTQGEKFFLIHSADWLTTHALFHEVAKLDVVKLLYNEQFAVQGLLRYHTYARFGIEIQVQINPTPFQQGGLICAMVPGDQSYGSIASLTVYPHGLLNCNINNVVRIKVPFIYTRGAYHFKDPQYPVWELTIRVWSELNIGTGTSAYTSLNVLARFTDLELHGLTPLSTQMMRNEFRVSTTENVVNLSNYEDARAKMSFALDQEDWKSDPSQGGRIKITHFTTWTSIPTLAAQFPFNASDSVGQQIKVIPVDPYFFQMTNSNPDQKCITALASICQMFCFWRGDLVFDFQVFPTKYHSGRLLFCFVPGNELIDVSGITLKQATTAPCAVMDITGVQSTLRFRVPWISDTPYRVNRYTKSAHQKGEYTAIGKLIVYCYNRLTSPSNVASHVRVNVYLSAINLECFAPLYHAMDVTTQVGDDSGGFSTTVSTEQNVPDPQVGITTMRDLKGRANRGKMDVSGVQAPVGAITTIEDPVLAKKVPETFPELKPGESRHTSDHMSIYKFMGRSHFLCTFTFNSNNKEYTFPITLSSTSNPPHGLPSTLRWFFNLFQLYRGPLDLTIIITGATDVDGMAWFTPVGLAVDTPWVEKESALSIDYKTALGAVRFNTRRTGNIQIRLPWYSYLYAVSGALDGLGDKTDSTFGLVSIQIANYNHSDEYLSFSCYLSVTEQSEFYFPRAPLNSNAMLSTETMMSRIAAGDLESSVDDPRSEEDRRFESHIESRKPYKELRLEVGKQRLKYAQEELSNEVLPPPRKMKGLFSQAKISLFYTEDHEIMKFSWRGVTADTRALRRFGFSLAAGRSVWTLEMDAGVLTGRLVRLNDEKWTEMKDDKIVSLVEKFTSNKHWSKVNFPHGMLDLEEIAANSKDFPNMSETDLCFLLHWLNPKKINLADRMLGLSGVQEIKEQGIGLIAECRTFLDSIAGTLKSMMFGFHHSVTVEIINTVLCFVKSGILLYVVQQLNQDEHSHIIGLLRVMNYADIGCSVISCGKVFSKMLETVFNWQMDSRMMELRTQSFSNWLRDICSGITIFKSFKDAIYWLYTKLKDFYDVNYGKKKDVLNVLKDNQQKIERAIEEADNFCILQIQDVEKFEQYQKGVDLIQKLRTVHSMAQVDPSLMIHLSPLRDCIARVHQKLKNLGSINQAMVTRCEPVVCYLYGKRGGGKSLTSIALATKICKHYGVEPEKNIYTKPVASDYWDGYSGQLVCIIDDIGQNTTDEDWSDFCQLVSGCPMRLNMASLEEKGRHFSSPFIIATSNWSNPSPKTVYVKEAIDRRLHFKIEVKPASFFKNPHNDMLNVNLAKTNDAIKDMSCVDLIMDGHNVSLMDLLSSLVMTVEIRKQNMTEFMELWSQGISDDDNDSAVAEFFQSFPSGEPSNSKLSSFFQSVTNHKWVAVGAAVGILGVLVGGWFVYKHFSRKEEEPIPTEGVYHGVTKPKQVIKLDADPVESQSTLEIAGLVRKNLVQFGVGEKNGCVRWVMNALGVKDDWLLVPSHAYKFEKDYEMMEFYFNRGGTYYSISAGNVVIQSLDVGFQDVVLMKVPTIPNFRDITEHFIKKGDVPRALNRLATFGQPVNGTPMLISEGPLKMEEKATYVHKKNDGTTVDLTVDQAWRGKGEGLPGMCGGALVSSNQSIQNAILGIHVAGGNSILVAKLVTQEMFQNIDKKIESQRIMKVEFTQCSMNVVSKTLFRKSPIHHHIDKDMINFPAAMPFSRAEIDPMAVMLSKYSLPMVEEPEGYKDVSVFFQNKVMGKSVLVDDFLDLDMAITGAPGIDAINMDSSPGFPYVQERLTKRDLIWLDENGLLLGIHPRLAQRILFNTVMMENCSDLDVIFTTCPKDELRPLDKVLESKTRAIDACPLDYTILCRMYWGPAISYFHLNPGFHTGVAIGIDPDRQWDELFKTMIRFGDVGLDLDFSAFDASLSPFMIREAGRIMSEISGTPSHFGTALINTIIYSKHLLYNCCYHVYGSMPSGSPCTALLNSIINNINLYYVFSKIFRKSPVFFSQAVRILCYGDDVLIVFSRDIQIDNLDQIGQKIVHEFKQLGMTATSADKTVPQLKPVSELTFLKRSFNLVEDRVRPAISEKTIWSLVAWQRSNAEFEQNLENAQWFAFMHGFEFYQKFYYFVQSCLEKEMIEYRLKSYDWWRMRFYDQCFVCDLS</sequence>
<accession>Q8V0N6</accession>
<reference key="1">
    <citation type="journal article" date="2002" name="J. Gen. Virol.">
        <title>Genetic characterization of wild-type genotype VII hepatitis A virus.</title>
        <authorList>
            <person name="Ching K.Z."/>
            <person name="Nakano T."/>
            <person name="Chapman L.E."/>
            <person name="Demby A."/>
            <person name="Robertson B.H."/>
        </authorList>
    </citation>
    <scope>NUCLEOTIDE SEQUENCE [GENOMIC RNA]</scope>
</reference>
<reference key="2">
    <citation type="journal article" date="1992" name="J. Gen. Virol.">
        <title>Genetic relatedness of hepatitis A virus strains recovered from different geographical regions.</title>
        <authorList>
            <person name="Robertson B.H."/>
            <person name="Jansen R.W."/>
            <person name="Khanna B."/>
            <person name="Totsuka A."/>
            <person name="Nainan O.V."/>
            <person name="Siegl G."/>
            <person name="Widell A."/>
            <person name="Margolis H.S."/>
            <person name="Isomura S."/>
            <person name="Ito K."/>
            <person name="Ishizu T."/>
            <person name="Moritsugu Y."/>
            <person name="Lemon S.M."/>
        </authorList>
    </citation>
    <scope>NUCLEOTIDE SEQUENCE [GENOMIC RNA] OF 764-819</scope>
</reference>
<dbReference type="EC" id="3.6.1.15"/>
<dbReference type="EC" id="3.4.22.28" evidence="4"/>
<dbReference type="EC" id="2.7.7.48" evidence="4"/>
<dbReference type="EMBL" id="AY644670">
    <property type="protein sequence ID" value="AAK44219.2"/>
    <property type="molecule type" value="Genomic_RNA"/>
</dbReference>
<dbReference type="EMBL" id="L07729">
    <property type="status" value="NOT_ANNOTATED_CDS"/>
    <property type="molecule type" value="Genomic_RNA"/>
</dbReference>
<dbReference type="SMR" id="Q8V0N6"/>
<dbReference type="MEROPS" id="C03.005"/>
<dbReference type="Proteomes" id="UP000007712">
    <property type="component" value="Genome"/>
</dbReference>
<dbReference type="GO" id="GO:0044162">
    <property type="term" value="C:host cell cytoplasmic vesicle membrane"/>
    <property type="evidence" value="ECO:0007669"/>
    <property type="project" value="UniProtKB-SubCell"/>
</dbReference>
<dbReference type="GO" id="GO:0044193">
    <property type="term" value="C:host cell mitochondrial outer membrane"/>
    <property type="evidence" value="ECO:0007669"/>
    <property type="project" value="UniProtKB-SubCell"/>
</dbReference>
<dbReference type="GO" id="GO:0072494">
    <property type="term" value="C:host multivesicular body"/>
    <property type="evidence" value="ECO:0007669"/>
    <property type="project" value="UniProtKB-SubCell"/>
</dbReference>
<dbReference type="GO" id="GO:0016020">
    <property type="term" value="C:membrane"/>
    <property type="evidence" value="ECO:0007669"/>
    <property type="project" value="UniProtKB-KW"/>
</dbReference>
<dbReference type="GO" id="GO:0039618">
    <property type="term" value="C:T=pseudo3 icosahedral viral capsid"/>
    <property type="evidence" value="ECO:0007669"/>
    <property type="project" value="UniProtKB-KW"/>
</dbReference>
<dbReference type="GO" id="GO:0005524">
    <property type="term" value="F:ATP binding"/>
    <property type="evidence" value="ECO:0007669"/>
    <property type="project" value="UniProtKB-KW"/>
</dbReference>
<dbReference type="GO" id="GO:0015267">
    <property type="term" value="F:channel activity"/>
    <property type="evidence" value="ECO:0007669"/>
    <property type="project" value="UniProtKB-KW"/>
</dbReference>
<dbReference type="GO" id="GO:0004197">
    <property type="term" value="F:cysteine-type endopeptidase activity"/>
    <property type="evidence" value="ECO:0007669"/>
    <property type="project" value="UniProtKB-EC"/>
</dbReference>
<dbReference type="GO" id="GO:0017111">
    <property type="term" value="F:ribonucleoside triphosphate phosphatase activity"/>
    <property type="evidence" value="ECO:0007669"/>
    <property type="project" value="UniProtKB-EC"/>
</dbReference>
<dbReference type="GO" id="GO:0003723">
    <property type="term" value="F:RNA binding"/>
    <property type="evidence" value="ECO:0007669"/>
    <property type="project" value="UniProtKB-KW"/>
</dbReference>
<dbReference type="GO" id="GO:0003724">
    <property type="term" value="F:RNA helicase activity"/>
    <property type="evidence" value="ECO:0007669"/>
    <property type="project" value="InterPro"/>
</dbReference>
<dbReference type="GO" id="GO:0003968">
    <property type="term" value="F:RNA-directed RNA polymerase activity"/>
    <property type="evidence" value="ECO:0007669"/>
    <property type="project" value="UniProtKB-KW"/>
</dbReference>
<dbReference type="GO" id="GO:0005198">
    <property type="term" value="F:structural molecule activity"/>
    <property type="evidence" value="ECO:0007669"/>
    <property type="project" value="InterPro"/>
</dbReference>
<dbReference type="GO" id="GO:0006351">
    <property type="term" value="P:DNA-templated transcription"/>
    <property type="evidence" value="ECO:0007669"/>
    <property type="project" value="InterPro"/>
</dbReference>
<dbReference type="GO" id="GO:0034220">
    <property type="term" value="P:monoatomic ion transmembrane transport"/>
    <property type="evidence" value="ECO:0007669"/>
    <property type="project" value="UniProtKB-KW"/>
</dbReference>
<dbReference type="GO" id="GO:0006508">
    <property type="term" value="P:proteolysis"/>
    <property type="evidence" value="ECO:0007669"/>
    <property type="project" value="UniProtKB-KW"/>
</dbReference>
<dbReference type="GO" id="GO:0046718">
    <property type="term" value="P:symbiont entry into host cell"/>
    <property type="evidence" value="ECO:0007669"/>
    <property type="project" value="UniProtKB-KW"/>
</dbReference>
<dbReference type="GO" id="GO:0039545">
    <property type="term" value="P:symbiont-mediated suppression of host cytoplasmic pattern recognition receptor signaling pathway via inhibition of MAVS activity"/>
    <property type="evidence" value="ECO:0007669"/>
    <property type="project" value="UniProtKB-KW"/>
</dbReference>
<dbReference type="GO" id="GO:0039694">
    <property type="term" value="P:viral RNA genome replication"/>
    <property type="evidence" value="ECO:0007669"/>
    <property type="project" value="InterPro"/>
</dbReference>
<dbReference type="GO" id="GO:0019062">
    <property type="term" value="P:virion attachment to host cell"/>
    <property type="evidence" value="ECO:0007669"/>
    <property type="project" value="UniProtKB-KW"/>
</dbReference>
<dbReference type="CDD" id="cd23215">
    <property type="entry name" value="Hepatovirus_RdRp"/>
    <property type="match status" value="1"/>
</dbReference>
<dbReference type="CDD" id="cd00205">
    <property type="entry name" value="rhv_like"/>
    <property type="match status" value="2"/>
</dbReference>
<dbReference type="FunFam" id="2.60.120.20:FF:000016">
    <property type="entry name" value="Genome polyprotein"/>
    <property type="match status" value="1"/>
</dbReference>
<dbReference type="FunFam" id="3.30.70.270:FF:000111">
    <property type="entry name" value="Genome polyprotein"/>
    <property type="match status" value="1"/>
</dbReference>
<dbReference type="Gene3D" id="1.20.960.20">
    <property type="match status" value="1"/>
</dbReference>
<dbReference type="Gene3D" id="2.60.120.20">
    <property type="match status" value="3"/>
</dbReference>
<dbReference type="Gene3D" id="3.30.70.270">
    <property type="match status" value="1"/>
</dbReference>
<dbReference type="Gene3D" id="2.40.10.10">
    <property type="entry name" value="Trypsin-like serine proteases"/>
    <property type="match status" value="2"/>
</dbReference>
<dbReference type="InterPro" id="IPR049133">
    <property type="entry name" value="2B_soluble"/>
</dbReference>
<dbReference type="InterPro" id="IPR043502">
    <property type="entry name" value="DNA/RNA_pol_sf"/>
</dbReference>
<dbReference type="InterPro" id="IPR004004">
    <property type="entry name" value="Helic/Pol/Pept_Calicivir-typ"/>
</dbReference>
<dbReference type="InterPro" id="IPR000605">
    <property type="entry name" value="Helicase_SF3_ssDNA/RNA_vir"/>
</dbReference>
<dbReference type="InterPro" id="IPR014759">
    <property type="entry name" value="Helicase_SF3_ssRNA_vir"/>
</dbReference>
<dbReference type="InterPro" id="IPR024354">
    <property type="entry name" value="Hepatitis_A_VP1-2A"/>
</dbReference>
<dbReference type="InterPro" id="IPR044067">
    <property type="entry name" value="PCV_3C_PRO"/>
</dbReference>
<dbReference type="InterPro" id="IPR009003">
    <property type="entry name" value="Peptidase_S1_PA"/>
</dbReference>
<dbReference type="InterPro" id="IPR043504">
    <property type="entry name" value="Peptidase_S1_PA_chymotrypsin"/>
</dbReference>
<dbReference type="InterPro" id="IPR001676">
    <property type="entry name" value="Picornavirus_capsid"/>
</dbReference>
<dbReference type="InterPro" id="IPR043128">
    <property type="entry name" value="Rev_trsase/Diguanyl_cyclase"/>
</dbReference>
<dbReference type="InterPro" id="IPR033703">
    <property type="entry name" value="Rhv-like"/>
</dbReference>
<dbReference type="InterPro" id="IPR001205">
    <property type="entry name" value="RNA-dir_pol_C"/>
</dbReference>
<dbReference type="InterPro" id="IPR007094">
    <property type="entry name" value="RNA-dir_pol_PSvirus"/>
</dbReference>
<dbReference type="InterPro" id="IPR029053">
    <property type="entry name" value="Viral_coat"/>
</dbReference>
<dbReference type="Pfam" id="PF20758">
    <property type="entry name" value="2B_soluble"/>
    <property type="match status" value="1"/>
</dbReference>
<dbReference type="Pfam" id="PF12944">
    <property type="entry name" value="HAV_VP"/>
    <property type="match status" value="1"/>
</dbReference>
<dbReference type="Pfam" id="PF00680">
    <property type="entry name" value="RdRP_1"/>
    <property type="match status" value="1"/>
</dbReference>
<dbReference type="Pfam" id="PF00073">
    <property type="entry name" value="Rhv"/>
    <property type="match status" value="2"/>
</dbReference>
<dbReference type="Pfam" id="PF00910">
    <property type="entry name" value="RNA_helicase"/>
    <property type="match status" value="1"/>
</dbReference>
<dbReference type="PRINTS" id="PR00918">
    <property type="entry name" value="CALICVIRUSNS"/>
</dbReference>
<dbReference type="SUPFAM" id="SSF56672">
    <property type="entry name" value="DNA/RNA polymerases"/>
    <property type="match status" value="1"/>
</dbReference>
<dbReference type="SUPFAM" id="SSF88633">
    <property type="entry name" value="Positive stranded ssRNA viruses"/>
    <property type="match status" value="3"/>
</dbReference>
<dbReference type="SUPFAM" id="SSF50494">
    <property type="entry name" value="Trypsin-like serine proteases"/>
    <property type="match status" value="1"/>
</dbReference>
<dbReference type="PROSITE" id="PS51874">
    <property type="entry name" value="PCV_3C_PRO"/>
    <property type="match status" value="1"/>
</dbReference>
<dbReference type="PROSITE" id="PS50507">
    <property type="entry name" value="RDRP_SSRNA_POS"/>
    <property type="match status" value="1"/>
</dbReference>
<dbReference type="PROSITE" id="PS51218">
    <property type="entry name" value="SF3_HELICASE_2"/>
    <property type="match status" value="1"/>
</dbReference>
<keyword id="KW-0067">ATP-binding</keyword>
<keyword id="KW-0167">Capsid protein</keyword>
<keyword id="KW-0175">Coiled coil</keyword>
<keyword id="KW-0191">Covalent protein-RNA linkage</keyword>
<keyword id="KW-1015">Disulfide bond</keyword>
<keyword id="KW-0347">Helicase</keyword>
<keyword id="KW-1035">Host cytoplasm</keyword>
<keyword id="KW-1036">Host cytoplasmic vesicle</keyword>
<keyword id="KW-1039">Host endosome</keyword>
<keyword id="KW-1043">Host membrane</keyword>
<keyword id="KW-1045">Host mitochondrion</keyword>
<keyword id="KW-1047">Host mitochondrion outer membrane</keyword>
<keyword id="KW-0945">Host-virus interaction</keyword>
<keyword id="KW-0378">Hydrolase</keyword>
<keyword id="KW-1090">Inhibition of host innate immune response by virus</keyword>
<keyword id="KW-1097">Inhibition of host MAVS by virus</keyword>
<keyword id="KW-1113">Inhibition of host RLR pathway by virus</keyword>
<keyword id="KW-0922">Interferon antiviral system evasion</keyword>
<keyword id="KW-0407">Ion channel</keyword>
<keyword id="KW-0406">Ion transport</keyword>
<keyword id="KW-0472">Membrane</keyword>
<keyword id="KW-0547">Nucleotide-binding</keyword>
<keyword id="KW-0548">Nucleotidyltransferase</keyword>
<keyword id="KW-0597">Phosphoprotein</keyword>
<keyword id="KW-0645">Protease</keyword>
<keyword id="KW-0694">RNA-binding</keyword>
<keyword id="KW-0696">RNA-directed RNA polymerase</keyword>
<keyword id="KW-1143">T=pseudo3 icosahedral capsid protein</keyword>
<keyword id="KW-0788">Thiol protease</keyword>
<keyword id="KW-0808">Transferase</keyword>
<keyword id="KW-0812">Transmembrane</keyword>
<keyword id="KW-1133">Transmembrane helix</keyword>
<keyword id="KW-0813">Transport</keyword>
<keyword id="KW-1161">Viral attachment to host cell</keyword>
<keyword id="KW-0899">Viral immunoevasion</keyword>
<keyword id="KW-1182">Viral ion channel</keyword>
<keyword id="KW-0693">Viral RNA replication</keyword>
<keyword id="KW-0946">Virion</keyword>
<keyword id="KW-1160">Virus entry into host cell</keyword>
<name>POLG_HAV88</name>
<organismHost>
    <name type="scientific">Homo sapiens</name>
    <name type="common">Human</name>
    <dbReference type="NCBI Taxonomy" id="9606"/>
</organismHost>